<reference key="1">
    <citation type="submission" date="2006-03" db="EMBL/GenBank/DDBJ databases">
        <title>Complete sequence of Rhodopseudomonas palustris BisB5.</title>
        <authorList>
            <consortium name="US DOE Joint Genome Institute"/>
            <person name="Copeland A."/>
            <person name="Lucas S."/>
            <person name="Lapidus A."/>
            <person name="Barry K."/>
            <person name="Detter J.C."/>
            <person name="Glavina del Rio T."/>
            <person name="Hammon N."/>
            <person name="Israni S."/>
            <person name="Dalin E."/>
            <person name="Tice H."/>
            <person name="Pitluck S."/>
            <person name="Chain P."/>
            <person name="Malfatti S."/>
            <person name="Shin M."/>
            <person name="Vergez L."/>
            <person name="Schmutz J."/>
            <person name="Larimer F."/>
            <person name="Land M."/>
            <person name="Hauser L."/>
            <person name="Pelletier D.A."/>
            <person name="Kyrpides N."/>
            <person name="Lykidis A."/>
            <person name="Oda Y."/>
            <person name="Harwood C.S."/>
            <person name="Richardson P."/>
        </authorList>
    </citation>
    <scope>NUCLEOTIDE SEQUENCE [LARGE SCALE GENOMIC DNA]</scope>
    <source>
        <strain>BisB5</strain>
    </source>
</reference>
<sequence length="156" mass="17679">MSRRHAAEKREVLPDPKFGNIVVTKFMNSVMYAGKKSVAERIVYGALDLIEAKTKQPPLGVFEQALDNVMPAIEVRSRRVGGATYQVPVEVRSTRRQALGIRWLITAARGRNEKTMTERLSAELLDASNNRGNAVKKREDVHKMAEANRAFSHYRW</sequence>
<evidence type="ECO:0000255" key="1">
    <source>
        <dbReference type="HAMAP-Rule" id="MF_00480"/>
    </source>
</evidence>
<evidence type="ECO:0000305" key="2"/>
<protein>
    <recommendedName>
        <fullName evidence="1">Small ribosomal subunit protein uS7</fullName>
    </recommendedName>
    <alternativeName>
        <fullName evidence="2">30S ribosomal protein S7</fullName>
    </alternativeName>
</protein>
<feature type="chain" id="PRO_1000014271" description="Small ribosomal subunit protein uS7">
    <location>
        <begin position="1"/>
        <end position="156"/>
    </location>
</feature>
<accession>Q134S5</accession>
<name>RS7_RHOPS</name>
<comment type="function">
    <text evidence="1">One of the primary rRNA binding proteins, it binds directly to 16S rRNA where it nucleates assembly of the head domain of the 30S subunit. Is located at the subunit interface close to the decoding center, probably blocks exit of the E-site tRNA.</text>
</comment>
<comment type="subunit">
    <text evidence="1">Part of the 30S ribosomal subunit. Contacts proteins S9 and S11.</text>
</comment>
<comment type="similarity">
    <text evidence="1">Belongs to the universal ribosomal protein uS7 family.</text>
</comment>
<dbReference type="EMBL" id="CP000283">
    <property type="protein sequence ID" value="ABE40414.1"/>
    <property type="molecule type" value="Genomic_DNA"/>
</dbReference>
<dbReference type="SMR" id="Q134S5"/>
<dbReference type="STRING" id="316057.RPD_3188"/>
<dbReference type="KEGG" id="rpd:RPD_3188"/>
<dbReference type="eggNOG" id="COG0049">
    <property type="taxonomic scope" value="Bacteria"/>
</dbReference>
<dbReference type="HOGENOM" id="CLU_072226_1_1_5"/>
<dbReference type="BioCyc" id="RPAL316057:RPD_RS16005-MONOMER"/>
<dbReference type="Proteomes" id="UP000001818">
    <property type="component" value="Chromosome"/>
</dbReference>
<dbReference type="GO" id="GO:0015935">
    <property type="term" value="C:small ribosomal subunit"/>
    <property type="evidence" value="ECO:0007669"/>
    <property type="project" value="InterPro"/>
</dbReference>
<dbReference type="GO" id="GO:0019843">
    <property type="term" value="F:rRNA binding"/>
    <property type="evidence" value="ECO:0007669"/>
    <property type="project" value="UniProtKB-UniRule"/>
</dbReference>
<dbReference type="GO" id="GO:0003735">
    <property type="term" value="F:structural constituent of ribosome"/>
    <property type="evidence" value="ECO:0007669"/>
    <property type="project" value="InterPro"/>
</dbReference>
<dbReference type="GO" id="GO:0000049">
    <property type="term" value="F:tRNA binding"/>
    <property type="evidence" value="ECO:0007669"/>
    <property type="project" value="UniProtKB-UniRule"/>
</dbReference>
<dbReference type="GO" id="GO:0006412">
    <property type="term" value="P:translation"/>
    <property type="evidence" value="ECO:0007669"/>
    <property type="project" value="UniProtKB-UniRule"/>
</dbReference>
<dbReference type="CDD" id="cd14869">
    <property type="entry name" value="uS7_Bacteria"/>
    <property type="match status" value="1"/>
</dbReference>
<dbReference type="FunFam" id="1.10.455.10:FF:000001">
    <property type="entry name" value="30S ribosomal protein S7"/>
    <property type="match status" value="1"/>
</dbReference>
<dbReference type="Gene3D" id="1.10.455.10">
    <property type="entry name" value="Ribosomal protein S7 domain"/>
    <property type="match status" value="1"/>
</dbReference>
<dbReference type="HAMAP" id="MF_00480_B">
    <property type="entry name" value="Ribosomal_uS7_B"/>
    <property type="match status" value="1"/>
</dbReference>
<dbReference type="InterPro" id="IPR000235">
    <property type="entry name" value="Ribosomal_uS7"/>
</dbReference>
<dbReference type="InterPro" id="IPR005717">
    <property type="entry name" value="Ribosomal_uS7_bac/org-type"/>
</dbReference>
<dbReference type="InterPro" id="IPR020606">
    <property type="entry name" value="Ribosomal_uS7_CS"/>
</dbReference>
<dbReference type="InterPro" id="IPR023798">
    <property type="entry name" value="Ribosomal_uS7_dom"/>
</dbReference>
<dbReference type="InterPro" id="IPR036823">
    <property type="entry name" value="Ribosomal_uS7_dom_sf"/>
</dbReference>
<dbReference type="NCBIfam" id="TIGR01029">
    <property type="entry name" value="rpsG_bact"/>
    <property type="match status" value="1"/>
</dbReference>
<dbReference type="PANTHER" id="PTHR11205">
    <property type="entry name" value="RIBOSOMAL PROTEIN S7"/>
    <property type="match status" value="1"/>
</dbReference>
<dbReference type="Pfam" id="PF00177">
    <property type="entry name" value="Ribosomal_S7"/>
    <property type="match status" value="1"/>
</dbReference>
<dbReference type="PIRSF" id="PIRSF002122">
    <property type="entry name" value="RPS7p_RPS7a_RPS5e_RPS7o"/>
    <property type="match status" value="1"/>
</dbReference>
<dbReference type="SUPFAM" id="SSF47973">
    <property type="entry name" value="Ribosomal protein S7"/>
    <property type="match status" value="1"/>
</dbReference>
<dbReference type="PROSITE" id="PS00052">
    <property type="entry name" value="RIBOSOMAL_S7"/>
    <property type="match status" value="1"/>
</dbReference>
<organism>
    <name type="scientific">Rhodopseudomonas palustris (strain BisB5)</name>
    <dbReference type="NCBI Taxonomy" id="316057"/>
    <lineage>
        <taxon>Bacteria</taxon>
        <taxon>Pseudomonadati</taxon>
        <taxon>Pseudomonadota</taxon>
        <taxon>Alphaproteobacteria</taxon>
        <taxon>Hyphomicrobiales</taxon>
        <taxon>Nitrobacteraceae</taxon>
        <taxon>Rhodopseudomonas</taxon>
    </lineage>
</organism>
<proteinExistence type="inferred from homology"/>
<gene>
    <name evidence="1" type="primary">rpsG</name>
    <name type="ordered locus">RPD_3188</name>
</gene>
<keyword id="KW-0687">Ribonucleoprotein</keyword>
<keyword id="KW-0689">Ribosomal protein</keyword>
<keyword id="KW-0694">RNA-binding</keyword>
<keyword id="KW-0699">rRNA-binding</keyword>
<keyword id="KW-0820">tRNA-binding</keyword>